<reference key="1">
    <citation type="journal article" date="1993" name="Gene">
        <title>cDNA clones from the olfactory organ of the spiny lobster encode a protein related to eukaryotic glutamine synthetase.</title>
        <authorList>
            <person name="Trapido-Rosenthal H.G."/>
            <person name="Linser P.J."/>
            <person name="Greenberg R.M."/>
            <person name="Gleeson R.A."/>
            <person name="Carr W.E."/>
        </authorList>
    </citation>
    <scope>NUCLEOTIDE SEQUENCE [MRNA]</scope>
    <source>
        <tissue>Olfactory organ</tissue>
    </source>
</reference>
<comment type="function">
    <text evidence="2">Glutamine synthetase that catalyzes the ATP-dependent conversion of glutamate and ammonia to glutamine.</text>
</comment>
<comment type="catalytic activity">
    <reaction evidence="2">
        <text>L-glutamate + NH4(+) + ATP = L-glutamine + ADP + phosphate + H(+)</text>
        <dbReference type="Rhea" id="RHEA:16169"/>
        <dbReference type="ChEBI" id="CHEBI:15378"/>
        <dbReference type="ChEBI" id="CHEBI:28938"/>
        <dbReference type="ChEBI" id="CHEBI:29985"/>
        <dbReference type="ChEBI" id="CHEBI:30616"/>
        <dbReference type="ChEBI" id="CHEBI:43474"/>
        <dbReference type="ChEBI" id="CHEBI:58359"/>
        <dbReference type="ChEBI" id="CHEBI:456216"/>
        <dbReference type="EC" id="6.3.1.2"/>
    </reaction>
</comment>
<comment type="cofactor">
    <cofactor evidence="1">
        <name>Mg(2+)</name>
        <dbReference type="ChEBI" id="CHEBI:18420"/>
    </cofactor>
    <cofactor evidence="2">
        <name>Mn(2+)</name>
        <dbReference type="ChEBI" id="CHEBI:29035"/>
    </cofactor>
</comment>
<comment type="subcellular location">
    <subcellularLocation>
        <location evidence="2">Cytoplasm</location>
        <location evidence="2">Cytosol</location>
    </subcellularLocation>
    <subcellularLocation>
        <location evidence="1">Microsome</location>
    </subcellularLocation>
    <subcellularLocation>
        <location evidence="1">Mitochondrion</location>
    </subcellularLocation>
</comment>
<comment type="similarity">
    <text evidence="7">Belongs to the glutamine synthetase family.</text>
</comment>
<proteinExistence type="evidence at transcript level"/>
<evidence type="ECO:0000250" key="1">
    <source>
        <dbReference type="UniProtKB" id="P09606"/>
    </source>
</evidence>
<evidence type="ECO:0000250" key="2">
    <source>
        <dbReference type="UniProtKB" id="P15104"/>
    </source>
</evidence>
<evidence type="ECO:0000250" key="3">
    <source>
        <dbReference type="UniProtKB" id="P9WN39"/>
    </source>
</evidence>
<evidence type="ECO:0000255" key="4">
    <source>
        <dbReference type="PROSITE-ProRule" id="PRU01330"/>
    </source>
</evidence>
<evidence type="ECO:0000255" key="5">
    <source>
        <dbReference type="PROSITE-ProRule" id="PRU01331"/>
    </source>
</evidence>
<evidence type="ECO:0000303" key="6">
    <source>
    </source>
</evidence>
<evidence type="ECO:0000305" key="7"/>
<feature type="chain" id="PRO_0000153145" description="Glutamine synthetase">
    <location>
        <begin position="1"/>
        <end position="361"/>
    </location>
</feature>
<feature type="domain" description="GS beta-grasp" evidence="4">
    <location>
        <begin position="23"/>
        <end position="103"/>
    </location>
</feature>
<feature type="domain" description="GS catalytic" evidence="5">
    <location>
        <begin position="110"/>
        <end position="361"/>
    </location>
</feature>
<feature type="binding site" evidence="2">
    <location>
        <position position="131"/>
    </location>
    <ligand>
        <name>ATP</name>
        <dbReference type="ChEBI" id="CHEBI:30616"/>
    </ligand>
</feature>
<feature type="binding site" evidence="2">
    <location>
        <position position="131"/>
    </location>
    <ligand>
        <name>Mn(2+)</name>
        <dbReference type="ChEBI" id="CHEBI:29035"/>
        <label>1</label>
    </ligand>
</feature>
<feature type="binding site" evidence="2">
    <location>
        <position position="133"/>
    </location>
    <ligand>
        <name>Mn(2+)</name>
        <dbReference type="ChEBI" id="CHEBI:29035"/>
        <label>2</label>
    </ligand>
</feature>
<feature type="binding site" evidence="2">
    <location>
        <begin position="200"/>
        <end position="205"/>
    </location>
    <ligand>
        <name>ATP</name>
        <dbReference type="ChEBI" id="CHEBI:30616"/>
    </ligand>
</feature>
<feature type="binding site" evidence="2">
    <location>
        <position position="200"/>
    </location>
    <ligand>
        <name>Mn(2+)</name>
        <dbReference type="ChEBI" id="CHEBI:29035"/>
        <label>2</label>
    </ligand>
</feature>
<feature type="binding site" evidence="3">
    <location>
        <begin position="243"/>
        <end position="244"/>
    </location>
    <ligand>
        <name>L-glutamate</name>
        <dbReference type="ChEBI" id="CHEBI:29985"/>
    </ligand>
</feature>
<feature type="binding site" evidence="2">
    <location>
        <position position="250"/>
    </location>
    <ligand>
        <name>Mn(2+)</name>
        <dbReference type="ChEBI" id="CHEBI:29035"/>
        <label>1</label>
    </ligand>
</feature>
<feature type="binding site" evidence="2">
    <location>
        <begin position="252"/>
        <end position="254"/>
    </location>
    <ligand>
        <name>ATP</name>
        <dbReference type="ChEBI" id="CHEBI:30616"/>
    </ligand>
</feature>
<feature type="binding site" evidence="2">
    <location>
        <position position="316"/>
    </location>
    <ligand>
        <name>ATP</name>
        <dbReference type="ChEBI" id="CHEBI:30616"/>
    </ligand>
</feature>
<feature type="binding site" evidence="3">
    <location>
        <position position="316"/>
    </location>
    <ligand>
        <name>L-glutamate</name>
        <dbReference type="ChEBI" id="CHEBI:29985"/>
    </ligand>
</feature>
<feature type="binding site" evidence="2">
    <location>
        <position position="321"/>
    </location>
    <ligand>
        <name>ATP</name>
        <dbReference type="ChEBI" id="CHEBI:30616"/>
    </ligand>
</feature>
<feature type="binding site" evidence="2">
    <location>
        <begin position="333"/>
        <end position="335"/>
    </location>
    <ligand>
        <name>ADP</name>
        <dbReference type="ChEBI" id="CHEBI:456216"/>
    </ligand>
</feature>
<feature type="binding site" evidence="2">
    <location>
        <position position="335"/>
    </location>
    <ligand>
        <name>Mn(2+)</name>
        <dbReference type="ChEBI" id="CHEBI:29035"/>
        <label>1</label>
    </ligand>
</feature>
<feature type="binding site" evidence="3">
    <location>
        <position position="337"/>
    </location>
    <ligand>
        <name>L-glutamate</name>
        <dbReference type="ChEBI" id="CHEBI:29985"/>
    </ligand>
</feature>
<organism>
    <name type="scientific">Panulirus argus</name>
    <name type="common">Caribbean spiny lobster</name>
    <name type="synonym">Palinurus argus</name>
    <dbReference type="NCBI Taxonomy" id="6737"/>
    <lineage>
        <taxon>Eukaryota</taxon>
        <taxon>Metazoa</taxon>
        <taxon>Ecdysozoa</taxon>
        <taxon>Arthropoda</taxon>
        <taxon>Crustacea</taxon>
        <taxon>Multicrustacea</taxon>
        <taxon>Malacostraca</taxon>
        <taxon>Eumalacostraca</taxon>
        <taxon>Eucarida</taxon>
        <taxon>Decapoda</taxon>
        <taxon>Pleocyemata</taxon>
        <taxon>Achelata</taxon>
        <taxon>Palinuroidea</taxon>
        <taxon>Palinuridae</taxon>
        <taxon>Panulirus</taxon>
    </lineage>
</organism>
<name>GLNA_PANAR</name>
<dbReference type="EC" id="6.3.1.2" evidence="2"/>
<dbReference type="EMBL" id="M96798">
    <property type="protein sequence ID" value="AAA02583.1"/>
    <property type="molecule type" value="mRNA"/>
</dbReference>
<dbReference type="PIR" id="JN0716">
    <property type="entry name" value="JN0716"/>
</dbReference>
<dbReference type="SMR" id="Q04831"/>
<dbReference type="GO" id="GO:0005829">
    <property type="term" value="C:cytosol"/>
    <property type="evidence" value="ECO:0007669"/>
    <property type="project" value="UniProtKB-SubCell"/>
</dbReference>
<dbReference type="GO" id="GO:0005783">
    <property type="term" value="C:endoplasmic reticulum"/>
    <property type="evidence" value="ECO:0007669"/>
    <property type="project" value="UniProtKB-KW"/>
</dbReference>
<dbReference type="GO" id="GO:0005739">
    <property type="term" value="C:mitochondrion"/>
    <property type="evidence" value="ECO:0007669"/>
    <property type="project" value="UniProtKB-SubCell"/>
</dbReference>
<dbReference type="GO" id="GO:0005524">
    <property type="term" value="F:ATP binding"/>
    <property type="evidence" value="ECO:0007669"/>
    <property type="project" value="UniProtKB-KW"/>
</dbReference>
<dbReference type="GO" id="GO:0004356">
    <property type="term" value="F:glutamine synthetase activity"/>
    <property type="evidence" value="ECO:0007669"/>
    <property type="project" value="UniProtKB-EC"/>
</dbReference>
<dbReference type="GO" id="GO:0046872">
    <property type="term" value="F:metal ion binding"/>
    <property type="evidence" value="ECO:0007669"/>
    <property type="project" value="UniProtKB-KW"/>
</dbReference>
<dbReference type="GO" id="GO:0006542">
    <property type="term" value="P:glutamine biosynthetic process"/>
    <property type="evidence" value="ECO:0007669"/>
    <property type="project" value="InterPro"/>
</dbReference>
<dbReference type="FunFam" id="3.10.20.70:FF:000004">
    <property type="entry name" value="Glutamine synthetase"/>
    <property type="match status" value="1"/>
</dbReference>
<dbReference type="FunFam" id="3.30.590.10:FF:000011">
    <property type="entry name" value="Glutamine synthetase"/>
    <property type="match status" value="1"/>
</dbReference>
<dbReference type="Gene3D" id="3.10.20.70">
    <property type="entry name" value="Glutamine synthetase, N-terminal domain"/>
    <property type="match status" value="1"/>
</dbReference>
<dbReference type="Gene3D" id="3.30.590.10">
    <property type="entry name" value="Glutamine synthetase/guanido kinase, catalytic domain"/>
    <property type="match status" value="1"/>
</dbReference>
<dbReference type="InterPro" id="IPR008147">
    <property type="entry name" value="Gln_synt_N"/>
</dbReference>
<dbReference type="InterPro" id="IPR036651">
    <property type="entry name" value="Gln_synt_N_sf"/>
</dbReference>
<dbReference type="InterPro" id="IPR014746">
    <property type="entry name" value="Gln_synth/guanido_kin_cat_dom"/>
</dbReference>
<dbReference type="InterPro" id="IPR008146">
    <property type="entry name" value="Gln_synth_cat_dom"/>
</dbReference>
<dbReference type="InterPro" id="IPR027303">
    <property type="entry name" value="Gln_synth_gly_rich_site"/>
</dbReference>
<dbReference type="InterPro" id="IPR027302">
    <property type="entry name" value="Gln_synth_N_conserv_site"/>
</dbReference>
<dbReference type="InterPro" id="IPR050292">
    <property type="entry name" value="Glutamine_Synthetase"/>
</dbReference>
<dbReference type="PANTHER" id="PTHR20852">
    <property type="entry name" value="GLUTAMINE SYNTHETASE"/>
    <property type="match status" value="1"/>
</dbReference>
<dbReference type="PANTHER" id="PTHR20852:SF57">
    <property type="entry name" value="GLUTAMINE SYNTHETASE 2 CYTOPLASMIC"/>
    <property type="match status" value="1"/>
</dbReference>
<dbReference type="Pfam" id="PF00120">
    <property type="entry name" value="Gln-synt_C"/>
    <property type="match status" value="1"/>
</dbReference>
<dbReference type="Pfam" id="PF03951">
    <property type="entry name" value="Gln-synt_N"/>
    <property type="match status" value="1"/>
</dbReference>
<dbReference type="SMART" id="SM01230">
    <property type="entry name" value="Gln-synt_C"/>
    <property type="match status" value="1"/>
</dbReference>
<dbReference type="SUPFAM" id="SSF54368">
    <property type="entry name" value="Glutamine synthetase, N-terminal domain"/>
    <property type="match status" value="1"/>
</dbReference>
<dbReference type="SUPFAM" id="SSF55931">
    <property type="entry name" value="Glutamine synthetase/guanido kinase"/>
    <property type="match status" value="1"/>
</dbReference>
<dbReference type="PROSITE" id="PS00180">
    <property type="entry name" value="GLNA_1"/>
    <property type="match status" value="1"/>
</dbReference>
<dbReference type="PROSITE" id="PS00181">
    <property type="entry name" value="GLNA_ATP"/>
    <property type="match status" value="1"/>
</dbReference>
<dbReference type="PROSITE" id="PS51986">
    <property type="entry name" value="GS_BETA_GRASP"/>
    <property type="match status" value="1"/>
</dbReference>
<dbReference type="PROSITE" id="PS51987">
    <property type="entry name" value="GS_CATALYTIC"/>
    <property type="match status" value="1"/>
</dbReference>
<protein>
    <recommendedName>
        <fullName evidence="6">Glutamine synthetase</fullName>
        <ecNumber evidence="2">6.3.1.2</ecNumber>
    </recommendedName>
    <alternativeName>
        <fullName evidence="7">Glutamate--ammonia ligase</fullName>
    </alternativeName>
</protein>
<accession>Q04831</accession>
<keyword id="KW-0067">ATP-binding</keyword>
<keyword id="KW-0963">Cytoplasm</keyword>
<keyword id="KW-0256">Endoplasmic reticulum</keyword>
<keyword id="KW-0436">Ligase</keyword>
<keyword id="KW-0460">Magnesium</keyword>
<keyword id="KW-0464">Manganese</keyword>
<keyword id="KW-0479">Metal-binding</keyword>
<keyword id="KW-0492">Microsome</keyword>
<keyword id="KW-0496">Mitochondrion</keyword>
<keyword id="KW-0547">Nucleotide-binding</keyword>
<sequence length="361" mass="40768">MNQGANKTVLDRYLRLDIPDQKCQAMYIWVDGTGENLRSKTRTLNFTPKSPSELPIWNFDGSSTGQAERSNSDVYLYPVAVYRDPFRLGNNKLVLCETYKYNKKPADTNQRWKCMEVMTRAADQHPWFGMEQEYTLLDIDKHPLGWPKNGYPGPQGPYYCGVGANRVYGRDVVEAHYRACLCAGINISGENAKVMPAQWEFQVGPCEGITMGDDLWMARYLLHRVAEDFDVVVTLDPKPIPGDWNGAGMHTNFSTEAMRGPNGILEIESAIDKLSKVHEKHIKAYDPHAGKDNERRLTGHYETSSIHDFSAGVANRGASIRIPRGVAEEKTGYLEDRRPSSNADPYVVSERLVRTICLNEQ</sequence>